<comment type="function">
    <text evidence="2">The physiological role of BioH is to remove the methyl group introduced by BioC when the pimeloyl moiety is complete. It allows to synthesize pimeloyl-ACP via the fatty acid synthetic pathway through the hydrolysis of the ester bonds of pimeloyl-ACP esters.</text>
</comment>
<comment type="catalytic activity">
    <reaction evidence="2">
        <text>6-carboxyhexanoyl-[ACP] methyl ester + H2O = 6-carboxyhexanoyl-[ACP] + methanol + H(+)</text>
        <dbReference type="Rhea" id="RHEA:42700"/>
        <dbReference type="Rhea" id="RHEA-COMP:9955"/>
        <dbReference type="Rhea" id="RHEA-COMP:10186"/>
        <dbReference type="ChEBI" id="CHEBI:15377"/>
        <dbReference type="ChEBI" id="CHEBI:15378"/>
        <dbReference type="ChEBI" id="CHEBI:17790"/>
        <dbReference type="ChEBI" id="CHEBI:78846"/>
        <dbReference type="ChEBI" id="CHEBI:82735"/>
        <dbReference type="EC" id="3.1.1.85"/>
    </reaction>
</comment>
<comment type="pathway">
    <text evidence="2">Cofactor biosynthesis; biotin biosynthesis.</text>
</comment>
<comment type="subunit">
    <text evidence="2">Monomer.</text>
</comment>
<comment type="subcellular location">
    <subcellularLocation>
        <location evidence="2">Cytoplasm</location>
    </subcellularLocation>
</comment>
<comment type="similarity">
    <text evidence="2">Belongs to the AB hydrolase superfamily. Carboxylesterase BioH family.</text>
</comment>
<comment type="sequence caution" evidence="3">
    <conflict type="erroneous initiation">
        <sequence resource="EMBL-CDS" id="AAM87452"/>
    </conflict>
</comment>
<comment type="sequence caution" evidence="3">
    <conflict type="erroneous initiation">
        <sequence resource="EMBL-CDS" id="AAS60408"/>
    </conflict>
</comment>
<evidence type="ECO:0000255" key="1"/>
<evidence type="ECO:0000255" key="2">
    <source>
        <dbReference type="HAMAP-Rule" id="MF_01260"/>
    </source>
</evidence>
<evidence type="ECO:0000305" key="3"/>
<protein>
    <recommendedName>
        <fullName evidence="2">Pimeloyl-[acyl-carrier protein] methyl ester esterase</fullName>
        <ecNumber evidence="2">3.1.1.85</ecNumber>
    </recommendedName>
    <alternativeName>
        <fullName evidence="2">Biotin synthesis protein BioH</fullName>
    </alternativeName>
    <alternativeName>
        <fullName evidence="2">Carboxylesterase BioH</fullName>
    </alternativeName>
</protein>
<keyword id="KW-0093">Biotin biosynthesis</keyword>
<keyword id="KW-0963">Cytoplasm</keyword>
<keyword id="KW-0378">Hydrolase</keyword>
<keyword id="KW-1185">Reference proteome</keyword>
<keyword id="KW-0719">Serine esterase</keyword>
<accession>Q74Y45</accession>
<accession>Q0WKH3</accession>
<accession>Q8CZK1</accession>
<accession>Q8ZJH8</accession>
<gene>
    <name evidence="2" type="primary">bioH</name>
    <name type="ordered locus">YPO0129</name>
    <name type="ordered locus">y3908</name>
    <name type="ordered locus">YP_0130</name>
</gene>
<proteinExistence type="inferred from homology"/>
<sequence length="258" mass="28590">MKQLYWYTCGEGDCDLVLLHGWGLNSGVWHCIIDRLAPHFRLHLVDLPGYGRSQDYGAMSLADMAERVAQQAPKQALWLGWSMGGLVASQIALSQPECVRGLITVSSSPCFTARDEWPGIKPEVLAGFQHQLSDDFHRTVERFLALQTLGTESSRQDARLLKSVVLQHQMPDVEVLTGGLAILRTADLRTALAGFTLPFMRVYGHLDSLVPRKVASLLDSAWPQTQSVVMQGAAHAPFISHPNDFAKLILNFAEENKK</sequence>
<reference key="1">
    <citation type="journal article" date="2001" name="Nature">
        <title>Genome sequence of Yersinia pestis, the causative agent of plague.</title>
        <authorList>
            <person name="Parkhill J."/>
            <person name="Wren B.W."/>
            <person name="Thomson N.R."/>
            <person name="Titball R.W."/>
            <person name="Holden M.T.G."/>
            <person name="Prentice M.B."/>
            <person name="Sebaihia M."/>
            <person name="James K.D."/>
            <person name="Churcher C.M."/>
            <person name="Mungall K.L."/>
            <person name="Baker S."/>
            <person name="Basham D."/>
            <person name="Bentley S.D."/>
            <person name="Brooks K."/>
            <person name="Cerdeno-Tarraga A.-M."/>
            <person name="Chillingworth T."/>
            <person name="Cronin A."/>
            <person name="Davies R.M."/>
            <person name="Davis P."/>
            <person name="Dougan G."/>
            <person name="Feltwell T."/>
            <person name="Hamlin N."/>
            <person name="Holroyd S."/>
            <person name="Jagels K."/>
            <person name="Karlyshev A.V."/>
            <person name="Leather S."/>
            <person name="Moule S."/>
            <person name="Oyston P.C.F."/>
            <person name="Quail M.A."/>
            <person name="Rutherford K.M."/>
            <person name="Simmonds M."/>
            <person name="Skelton J."/>
            <person name="Stevens K."/>
            <person name="Whitehead S."/>
            <person name="Barrell B.G."/>
        </authorList>
    </citation>
    <scope>NUCLEOTIDE SEQUENCE [LARGE SCALE GENOMIC DNA]</scope>
    <source>
        <strain>CO-92 / Biovar Orientalis</strain>
    </source>
</reference>
<reference key="2">
    <citation type="journal article" date="2002" name="J. Bacteriol.">
        <title>Genome sequence of Yersinia pestis KIM.</title>
        <authorList>
            <person name="Deng W."/>
            <person name="Burland V."/>
            <person name="Plunkett G. III"/>
            <person name="Boutin A."/>
            <person name="Mayhew G.F."/>
            <person name="Liss P."/>
            <person name="Perna N.T."/>
            <person name="Rose D.J."/>
            <person name="Mau B."/>
            <person name="Zhou S."/>
            <person name="Schwartz D.C."/>
            <person name="Fetherston J.D."/>
            <person name="Lindler L.E."/>
            <person name="Brubaker R.R."/>
            <person name="Plano G.V."/>
            <person name="Straley S.C."/>
            <person name="McDonough K.A."/>
            <person name="Nilles M.L."/>
            <person name="Matson J.S."/>
            <person name="Blattner F.R."/>
            <person name="Perry R.D."/>
        </authorList>
    </citation>
    <scope>NUCLEOTIDE SEQUENCE [LARGE SCALE GENOMIC DNA]</scope>
    <source>
        <strain>KIM10+ / Biovar Mediaevalis</strain>
    </source>
</reference>
<reference key="3">
    <citation type="journal article" date="2004" name="DNA Res.">
        <title>Complete genome sequence of Yersinia pestis strain 91001, an isolate avirulent to humans.</title>
        <authorList>
            <person name="Song Y."/>
            <person name="Tong Z."/>
            <person name="Wang J."/>
            <person name="Wang L."/>
            <person name="Guo Z."/>
            <person name="Han Y."/>
            <person name="Zhang J."/>
            <person name="Pei D."/>
            <person name="Zhou D."/>
            <person name="Qin H."/>
            <person name="Pang X."/>
            <person name="Han Y."/>
            <person name="Zhai J."/>
            <person name="Li M."/>
            <person name="Cui B."/>
            <person name="Qi Z."/>
            <person name="Jin L."/>
            <person name="Dai R."/>
            <person name="Chen F."/>
            <person name="Li S."/>
            <person name="Ye C."/>
            <person name="Du Z."/>
            <person name="Lin W."/>
            <person name="Wang J."/>
            <person name="Yu J."/>
            <person name="Yang H."/>
            <person name="Wang J."/>
            <person name="Huang P."/>
            <person name="Yang R."/>
        </authorList>
    </citation>
    <scope>NUCLEOTIDE SEQUENCE [LARGE SCALE GENOMIC DNA]</scope>
    <source>
        <strain>91001 / Biovar Mediaevalis</strain>
    </source>
</reference>
<feature type="chain" id="PRO_0000204506" description="Pimeloyl-[acyl-carrier protein] methyl ester esterase">
    <location>
        <begin position="1"/>
        <end position="258"/>
    </location>
</feature>
<feature type="domain" description="AB hydrolase-1" evidence="1">
    <location>
        <begin position="16"/>
        <end position="242"/>
    </location>
</feature>
<feature type="active site" description="Nucleophile" evidence="2">
    <location>
        <position position="82"/>
    </location>
</feature>
<feature type="active site" evidence="2">
    <location>
        <position position="207"/>
    </location>
</feature>
<feature type="active site" evidence="2">
    <location>
        <position position="235"/>
    </location>
</feature>
<feature type="binding site" evidence="2">
    <location>
        <position position="22"/>
    </location>
    <ligand>
        <name>substrate</name>
    </ligand>
</feature>
<feature type="binding site" evidence="2">
    <location>
        <begin position="82"/>
        <end position="83"/>
    </location>
    <ligand>
        <name>substrate</name>
    </ligand>
</feature>
<feature type="binding site" evidence="2">
    <location>
        <begin position="143"/>
        <end position="147"/>
    </location>
    <ligand>
        <name>substrate</name>
    </ligand>
</feature>
<feature type="binding site" evidence="2">
    <location>
        <position position="235"/>
    </location>
    <ligand>
        <name>substrate</name>
    </ligand>
</feature>
<name>BIOH_YERPE</name>
<organism>
    <name type="scientific">Yersinia pestis</name>
    <dbReference type="NCBI Taxonomy" id="632"/>
    <lineage>
        <taxon>Bacteria</taxon>
        <taxon>Pseudomonadati</taxon>
        <taxon>Pseudomonadota</taxon>
        <taxon>Gammaproteobacteria</taxon>
        <taxon>Enterobacterales</taxon>
        <taxon>Yersiniaceae</taxon>
        <taxon>Yersinia</taxon>
    </lineage>
</organism>
<dbReference type="EC" id="3.1.1.85" evidence="2"/>
<dbReference type="EMBL" id="AL590842">
    <property type="protein sequence ID" value="CAL18815.1"/>
    <property type="molecule type" value="Genomic_DNA"/>
</dbReference>
<dbReference type="EMBL" id="AE009952">
    <property type="protein sequence ID" value="AAM87452.1"/>
    <property type="status" value="ALT_INIT"/>
    <property type="molecule type" value="Genomic_DNA"/>
</dbReference>
<dbReference type="EMBL" id="AE017042">
    <property type="protein sequence ID" value="AAS60408.1"/>
    <property type="status" value="ALT_INIT"/>
    <property type="molecule type" value="Genomic_DNA"/>
</dbReference>
<dbReference type="PIR" id="AF0016">
    <property type="entry name" value="AF0016"/>
</dbReference>
<dbReference type="RefSeq" id="WP_002208922.1">
    <property type="nucleotide sequence ID" value="NZ_WUCM01000004.1"/>
</dbReference>
<dbReference type="RefSeq" id="YP_002345215.1">
    <property type="nucleotide sequence ID" value="NC_003143.1"/>
</dbReference>
<dbReference type="SMR" id="Q74Y45"/>
<dbReference type="STRING" id="214092.YPO0129"/>
<dbReference type="ESTHER" id="yerpe-BIOH">
    <property type="family name" value="BioH"/>
</dbReference>
<dbReference type="PaxDb" id="214092-YPO0129"/>
<dbReference type="DNASU" id="1148855"/>
<dbReference type="EnsemblBacteria" id="AAS60408">
    <property type="protein sequence ID" value="AAS60408"/>
    <property type="gene ID" value="YP_0130"/>
</dbReference>
<dbReference type="GeneID" id="57974471"/>
<dbReference type="KEGG" id="ype:YPO0129"/>
<dbReference type="KEGG" id="ypk:y3908"/>
<dbReference type="KEGG" id="ypm:YP_0130"/>
<dbReference type="PATRIC" id="fig|1028802.3.peg.151"/>
<dbReference type="eggNOG" id="COG0596">
    <property type="taxonomic scope" value="Bacteria"/>
</dbReference>
<dbReference type="HOGENOM" id="CLU_020336_12_2_6"/>
<dbReference type="OMA" id="PFISHPQ"/>
<dbReference type="OrthoDB" id="9780744at2"/>
<dbReference type="UniPathway" id="UPA00078"/>
<dbReference type="Proteomes" id="UP000000815">
    <property type="component" value="Chromosome"/>
</dbReference>
<dbReference type="Proteomes" id="UP000001019">
    <property type="component" value="Chromosome"/>
</dbReference>
<dbReference type="Proteomes" id="UP000002490">
    <property type="component" value="Chromosome"/>
</dbReference>
<dbReference type="GO" id="GO:0005737">
    <property type="term" value="C:cytoplasm"/>
    <property type="evidence" value="ECO:0007669"/>
    <property type="project" value="UniProtKB-SubCell"/>
</dbReference>
<dbReference type="GO" id="GO:0090499">
    <property type="term" value="F:pimelyl-[acyl-carrier protein] methyl ester esterase activity"/>
    <property type="evidence" value="ECO:0000318"/>
    <property type="project" value="GO_Central"/>
</dbReference>
<dbReference type="GO" id="GO:0009102">
    <property type="term" value="P:biotin biosynthetic process"/>
    <property type="evidence" value="ECO:0000318"/>
    <property type="project" value="GO_Central"/>
</dbReference>
<dbReference type="Gene3D" id="3.40.50.1820">
    <property type="entry name" value="alpha/beta hydrolase"/>
    <property type="match status" value="1"/>
</dbReference>
<dbReference type="HAMAP" id="MF_01260">
    <property type="entry name" value="Carboxylester"/>
    <property type="match status" value="1"/>
</dbReference>
<dbReference type="InterPro" id="IPR000073">
    <property type="entry name" value="AB_hydrolase_1"/>
</dbReference>
<dbReference type="InterPro" id="IPR029058">
    <property type="entry name" value="AB_hydrolase_fold"/>
</dbReference>
<dbReference type="InterPro" id="IPR010076">
    <property type="entry name" value="BioH"/>
</dbReference>
<dbReference type="InterPro" id="IPR050228">
    <property type="entry name" value="Carboxylesterase_BioH"/>
</dbReference>
<dbReference type="NCBIfam" id="TIGR01738">
    <property type="entry name" value="bioH"/>
    <property type="match status" value="1"/>
</dbReference>
<dbReference type="PANTHER" id="PTHR43194">
    <property type="entry name" value="HYDROLASE ALPHA/BETA FOLD FAMILY"/>
    <property type="match status" value="1"/>
</dbReference>
<dbReference type="PANTHER" id="PTHR43194:SF5">
    <property type="entry name" value="PIMELOYL-[ACYL-CARRIER PROTEIN] METHYL ESTER ESTERASE"/>
    <property type="match status" value="1"/>
</dbReference>
<dbReference type="Pfam" id="PF00561">
    <property type="entry name" value="Abhydrolase_1"/>
    <property type="match status" value="1"/>
</dbReference>
<dbReference type="SUPFAM" id="SSF53474">
    <property type="entry name" value="alpha/beta-Hydrolases"/>
    <property type="match status" value="1"/>
</dbReference>